<protein>
    <recommendedName>
        <fullName evidence="1">Small ribosomal subunit protein uS3</fullName>
    </recommendedName>
    <alternativeName>
        <fullName evidence="2">30S ribosomal protein S3</fullName>
    </alternativeName>
</protein>
<reference key="1">
    <citation type="journal article" date="2004" name="Proc. Natl. Acad. Sci. U.S.A.">
        <title>Complete genomes of two clinical Staphylococcus aureus strains: evidence for the rapid evolution of virulence and drug resistance.</title>
        <authorList>
            <person name="Holden M.T.G."/>
            <person name="Feil E.J."/>
            <person name="Lindsay J.A."/>
            <person name="Peacock S.J."/>
            <person name="Day N.P.J."/>
            <person name="Enright M.C."/>
            <person name="Foster T.J."/>
            <person name="Moore C.E."/>
            <person name="Hurst L."/>
            <person name="Atkin R."/>
            <person name="Barron A."/>
            <person name="Bason N."/>
            <person name="Bentley S.D."/>
            <person name="Chillingworth C."/>
            <person name="Chillingworth T."/>
            <person name="Churcher C."/>
            <person name="Clark L."/>
            <person name="Corton C."/>
            <person name="Cronin A."/>
            <person name="Doggett J."/>
            <person name="Dowd L."/>
            <person name="Feltwell T."/>
            <person name="Hance Z."/>
            <person name="Harris B."/>
            <person name="Hauser H."/>
            <person name="Holroyd S."/>
            <person name="Jagels K."/>
            <person name="James K.D."/>
            <person name="Lennard N."/>
            <person name="Line A."/>
            <person name="Mayes R."/>
            <person name="Moule S."/>
            <person name="Mungall K."/>
            <person name="Ormond D."/>
            <person name="Quail M.A."/>
            <person name="Rabbinowitsch E."/>
            <person name="Rutherford K.M."/>
            <person name="Sanders M."/>
            <person name="Sharp S."/>
            <person name="Simmonds M."/>
            <person name="Stevens K."/>
            <person name="Whitehead S."/>
            <person name="Barrell B.G."/>
            <person name="Spratt B.G."/>
            <person name="Parkhill J."/>
        </authorList>
    </citation>
    <scope>NUCLEOTIDE SEQUENCE [LARGE SCALE GENOMIC DNA]</scope>
    <source>
        <strain>MRSA252</strain>
    </source>
</reference>
<dbReference type="EMBL" id="BX571856">
    <property type="protein sequence ID" value="CAG41310.1"/>
    <property type="molecule type" value="Genomic_DNA"/>
</dbReference>
<dbReference type="RefSeq" id="WP_000529877.1">
    <property type="nucleotide sequence ID" value="NC_002952.2"/>
</dbReference>
<dbReference type="SMR" id="Q6GEI9"/>
<dbReference type="GeneID" id="98346556"/>
<dbReference type="KEGG" id="sar:SAR2329"/>
<dbReference type="HOGENOM" id="CLU_058591_0_2_9"/>
<dbReference type="Proteomes" id="UP000000596">
    <property type="component" value="Chromosome"/>
</dbReference>
<dbReference type="GO" id="GO:0022627">
    <property type="term" value="C:cytosolic small ribosomal subunit"/>
    <property type="evidence" value="ECO:0007669"/>
    <property type="project" value="TreeGrafter"/>
</dbReference>
<dbReference type="GO" id="GO:0003729">
    <property type="term" value="F:mRNA binding"/>
    <property type="evidence" value="ECO:0007669"/>
    <property type="project" value="UniProtKB-UniRule"/>
</dbReference>
<dbReference type="GO" id="GO:0019843">
    <property type="term" value="F:rRNA binding"/>
    <property type="evidence" value="ECO:0007669"/>
    <property type="project" value="UniProtKB-UniRule"/>
</dbReference>
<dbReference type="GO" id="GO:0003735">
    <property type="term" value="F:structural constituent of ribosome"/>
    <property type="evidence" value="ECO:0007669"/>
    <property type="project" value="InterPro"/>
</dbReference>
<dbReference type="GO" id="GO:0006412">
    <property type="term" value="P:translation"/>
    <property type="evidence" value="ECO:0007669"/>
    <property type="project" value="UniProtKB-UniRule"/>
</dbReference>
<dbReference type="CDD" id="cd02412">
    <property type="entry name" value="KH-II_30S_S3"/>
    <property type="match status" value="1"/>
</dbReference>
<dbReference type="FunFam" id="3.30.1140.32:FF:000001">
    <property type="entry name" value="30S ribosomal protein S3"/>
    <property type="match status" value="1"/>
</dbReference>
<dbReference type="FunFam" id="3.30.300.20:FF:000001">
    <property type="entry name" value="30S ribosomal protein S3"/>
    <property type="match status" value="1"/>
</dbReference>
<dbReference type="Gene3D" id="3.30.300.20">
    <property type="match status" value="1"/>
</dbReference>
<dbReference type="Gene3D" id="3.30.1140.32">
    <property type="entry name" value="Ribosomal protein S3, C-terminal domain"/>
    <property type="match status" value="1"/>
</dbReference>
<dbReference type="HAMAP" id="MF_01309_B">
    <property type="entry name" value="Ribosomal_uS3_B"/>
    <property type="match status" value="1"/>
</dbReference>
<dbReference type="InterPro" id="IPR004087">
    <property type="entry name" value="KH_dom"/>
</dbReference>
<dbReference type="InterPro" id="IPR015946">
    <property type="entry name" value="KH_dom-like_a/b"/>
</dbReference>
<dbReference type="InterPro" id="IPR004044">
    <property type="entry name" value="KH_dom_type_2"/>
</dbReference>
<dbReference type="InterPro" id="IPR009019">
    <property type="entry name" value="KH_sf_prok-type"/>
</dbReference>
<dbReference type="InterPro" id="IPR036419">
    <property type="entry name" value="Ribosomal_S3_C_sf"/>
</dbReference>
<dbReference type="InterPro" id="IPR005704">
    <property type="entry name" value="Ribosomal_uS3_bac-typ"/>
</dbReference>
<dbReference type="InterPro" id="IPR001351">
    <property type="entry name" value="Ribosomal_uS3_C"/>
</dbReference>
<dbReference type="InterPro" id="IPR018280">
    <property type="entry name" value="Ribosomal_uS3_CS"/>
</dbReference>
<dbReference type="NCBIfam" id="TIGR01009">
    <property type="entry name" value="rpsC_bact"/>
    <property type="match status" value="1"/>
</dbReference>
<dbReference type="PANTHER" id="PTHR11760">
    <property type="entry name" value="30S/40S RIBOSOMAL PROTEIN S3"/>
    <property type="match status" value="1"/>
</dbReference>
<dbReference type="PANTHER" id="PTHR11760:SF19">
    <property type="entry name" value="SMALL RIBOSOMAL SUBUNIT PROTEIN US3C"/>
    <property type="match status" value="1"/>
</dbReference>
<dbReference type="Pfam" id="PF07650">
    <property type="entry name" value="KH_2"/>
    <property type="match status" value="1"/>
</dbReference>
<dbReference type="Pfam" id="PF00189">
    <property type="entry name" value="Ribosomal_S3_C"/>
    <property type="match status" value="1"/>
</dbReference>
<dbReference type="SMART" id="SM00322">
    <property type="entry name" value="KH"/>
    <property type="match status" value="1"/>
</dbReference>
<dbReference type="SUPFAM" id="SSF54814">
    <property type="entry name" value="Prokaryotic type KH domain (KH-domain type II)"/>
    <property type="match status" value="1"/>
</dbReference>
<dbReference type="SUPFAM" id="SSF54821">
    <property type="entry name" value="Ribosomal protein S3 C-terminal domain"/>
    <property type="match status" value="1"/>
</dbReference>
<dbReference type="PROSITE" id="PS50823">
    <property type="entry name" value="KH_TYPE_2"/>
    <property type="match status" value="1"/>
</dbReference>
<dbReference type="PROSITE" id="PS00548">
    <property type="entry name" value="RIBOSOMAL_S3"/>
    <property type="match status" value="1"/>
</dbReference>
<keyword id="KW-0687">Ribonucleoprotein</keyword>
<keyword id="KW-0689">Ribosomal protein</keyword>
<keyword id="KW-0694">RNA-binding</keyword>
<keyword id="KW-0699">rRNA-binding</keyword>
<gene>
    <name evidence="1" type="primary">rpsC</name>
    <name type="ordered locus">SAR2329</name>
</gene>
<name>RS3_STAAR</name>
<sequence length="217" mass="24100">MGQKINPIGLRVGIIRDWEAKWYAEKDFASLLHEDLKIRKFIDNELKEASVSHVEIERAANRINIAIHTGKPGMVIGKGGSEIEKLRNKLNALTDKKVHINVIEIKKVDLDARLVAENIARQLENRASFRRVQKQAITRAMKLGAKGIKTQVSGRLGGADIARAEQYSEGTVPLHTLRADIDYAHAEADTTYGKLGVKVWIYRGEVLPTKNTSGGGK</sequence>
<proteinExistence type="inferred from homology"/>
<accession>Q6GEI9</accession>
<feature type="chain" id="PRO_0000130200" description="Small ribosomal subunit protein uS3">
    <location>
        <begin position="1"/>
        <end position="217"/>
    </location>
</feature>
<feature type="domain" description="KH type-2" evidence="1">
    <location>
        <begin position="38"/>
        <end position="106"/>
    </location>
</feature>
<organism>
    <name type="scientific">Staphylococcus aureus (strain MRSA252)</name>
    <dbReference type="NCBI Taxonomy" id="282458"/>
    <lineage>
        <taxon>Bacteria</taxon>
        <taxon>Bacillati</taxon>
        <taxon>Bacillota</taxon>
        <taxon>Bacilli</taxon>
        <taxon>Bacillales</taxon>
        <taxon>Staphylococcaceae</taxon>
        <taxon>Staphylococcus</taxon>
    </lineage>
</organism>
<evidence type="ECO:0000255" key="1">
    <source>
        <dbReference type="HAMAP-Rule" id="MF_01309"/>
    </source>
</evidence>
<evidence type="ECO:0000305" key="2"/>
<comment type="function">
    <text evidence="1">Binds the lower part of the 30S subunit head. Binds mRNA in the 70S ribosome, positioning it for translation.</text>
</comment>
<comment type="subunit">
    <text evidence="1">Part of the 30S ribosomal subunit. Forms a tight complex with proteins S10 and S14.</text>
</comment>
<comment type="similarity">
    <text evidence="1">Belongs to the universal ribosomal protein uS3 family.</text>
</comment>